<keyword id="KW-0131">Cell cycle</keyword>
<keyword id="KW-0132">Cell division</keyword>
<keyword id="KW-1185">Reference proteome</keyword>
<sequence>MALLDFFLSRKKNTANIAKERLQIIVAERRRSDAEPHYLPQLRKDILEVICKYVQIDPEMVTVQLEQKDGDISILELNVTLPEAEELK</sequence>
<accession>A1AA98</accession>
<proteinExistence type="inferred from homology"/>
<gene>
    <name evidence="1" type="primary">minE</name>
    <name type="ordered locus">Ecok1_10940</name>
    <name type="ORF">APECO1_287</name>
</gene>
<organism>
    <name type="scientific">Escherichia coli O1:K1 / APEC</name>
    <dbReference type="NCBI Taxonomy" id="405955"/>
    <lineage>
        <taxon>Bacteria</taxon>
        <taxon>Pseudomonadati</taxon>
        <taxon>Pseudomonadota</taxon>
        <taxon>Gammaproteobacteria</taxon>
        <taxon>Enterobacterales</taxon>
        <taxon>Enterobacteriaceae</taxon>
        <taxon>Escherichia</taxon>
    </lineage>
</organism>
<comment type="function">
    <text evidence="1">Prevents the cell division inhibition by proteins MinC and MinD at internal division sites while permitting inhibition at polar sites. This ensures cell division at the proper site by restricting the formation of a division septum at the midpoint of the long axis of the cell.</text>
</comment>
<comment type="similarity">
    <text evidence="1">Belongs to the MinE family.</text>
</comment>
<evidence type="ECO:0000255" key="1">
    <source>
        <dbReference type="HAMAP-Rule" id="MF_00262"/>
    </source>
</evidence>
<reference key="1">
    <citation type="journal article" date="2007" name="J. Bacteriol.">
        <title>The genome sequence of avian pathogenic Escherichia coli strain O1:K1:H7 shares strong similarities with human extraintestinal pathogenic E. coli genomes.</title>
        <authorList>
            <person name="Johnson T.J."/>
            <person name="Kariyawasam S."/>
            <person name="Wannemuehler Y."/>
            <person name="Mangiamele P."/>
            <person name="Johnson S.J."/>
            <person name="Doetkott C."/>
            <person name="Skyberg J.A."/>
            <person name="Lynne A.M."/>
            <person name="Johnson J.R."/>
            <person name="Nolan L.K."/>
        </authorList>
    </citation>
    <scope>NUCLEOTIDE SEQUENCE [LARGE SCALE GENOMIC DNA]</scope>
</reference>
<feature type="chain" id="PRO_0000298112" description="Cell division topological specificity factor">
    <location>
        <begin position="1"/>
        <end position="88"/>
    </location>
</feature>
<protein>
    <recommendedName>
        <fullName evidence="1">Cell division topological specificity factor</fullName>
    </recommendedName>
</protein>
<name>MINE_ECOK1</name>
<dbReference type="EMBL" id="CP000468">
    <property type="protein sequence ID" value="ABJ00588.1"/>
    <property type="molecule type" value="Genomic_DNA"/>
</dbReference>
<dbReference type="RefSeq" id="WP_001185665.1">
    <property type="nucleotide sequence ID" value="NZ_CADILS010000001.1"/>
</dbReference>
<dbReference type="BMRB" id="A1AA98"/>
<dbReference type="SMR" id="A1AA98"/>
<dbReference type="GeneID" id="93776260"/>
<dbReference type="KEGG" id="ecv:APECO1_287"/>
<dbReference type="HOGENOM" id="CLU_137929_2_2_6"/>
<dbReference type="Proteomes" id="UP000008216">
    <property type="component" value="Chromosome"/>
</dbReference>
<dbReference type="GO" id="GO:0051301">
    <property type="term" value="P:cell division"/>
    <property type="evidence" value="ECO:0007669"/>
    <property type="project" value="UniProtKB-KW"/>
</dbReference>
<dbReference type="GO" id="GO:0032955">
    <property type="term" value="P:regulation of division septum assembly"/>
    <property type="evidence" value="ECO:0007669"/>
    <property type="project" value="InterPro"/>
</dbReference>
<dbReference type="FunFam" id="3.30.1070.10:FF:000001">
    <property type="entry name" value="Cell division topological specificity factor"/>
    <property type="match status" value="1"/>
</dbReference>
<dbReference type="Gene3D" id="3.30.1070.10">
    <property type="entry name" value="Cell division topological specificity factor MinE"/>
    <property type="match status" value="1"/>
</dbReference>
<dbReference type="HAMAP" id="MF_00262">
    <property type="entry name" value="MinE"/>
    <property type="match status" value="1"/>
</dbReference>
<dbReference type="InterPro" id="IPR005527">
    <property type="entry name" value="MinE"/>
</dbReference>
<dbReference type="InterPro" id="IPR036707">
    <property type="entry name" value="MinE_sf"/>
</dbReference>
<dbReference type="NCBIfam" id="TIGR01215">
    <property type="entry name" value="minE"/>
    <property type="match status" value="1"/>
</dbReference>
<dbReference type="NCBIfam" id="NF001422">
    <property type="entry name" value="PRK00296.1"/>
    <property type="match status" value="1"/>
</dbReference>
<dbReference type="Pfam" id="PF03776">
    <property type="entry name" value="MinE"/>
    <property type="match status" value="1"/>
</dbReference>
<dbReference type="SUPFAM" id="SSF55229">
    <property type="entry name" value="Cell division protein MinE topological specificity domain"/>
    <property type="match status" value="1"/>
</dbReference>